<sequence length="274" mass="31260">MGTLSVNQNKLQKRLRRLAGEAITDFNMIEDGDKVMVCLSGGKDSYTMLDILLYLQKVAPIRFEIVAVNMDQKQPGFPEHVLPEYLKSIGVEYHIVEKDTYSVVKEKIPEGKTTCSLCSRLRRGTLYTFADEIGATKMALGHHRDDILETFFLNMFYGGTLKAMPPKLLADDGRNVVIRPLAYCSEKDIEAYSQLKEFPIIPCNLCGSQENLQRQVVKEMLLEWERKSPGRTEIMFRALQNVVPSQLADRNLFDFANLRIDENATPRFLDVMNL</sequence>
<dbReference type="EC" id="2.8.1.-" evidence="1"/>
<dbReference type="EMBL" id="AE004091">
    <property type="protein sequence ID" value="AAG04581.1"/>
    <property type="molecule type" value="Genomic_DNA"/>
</dbReference>
<dbReference type="PIR" id="C83497">
    <property type="entry name" value="C83497"/>
</dbReference>
<dbReference type="RefSeq" id="NP_249883.1">
    <property type="nucleotide sequence ID" value="NC_002516.2"/>
</dbReference>
<dbReference type="RefSeq" id="WP_003082462.1">
    <property type="nucleotide sequence ID" value="NZ_QZGE01000006.1"/>
</dbReference>
<dbReference type="SMR" id="Q9I4E6"/>
<dbReference type="FunCoup" id="Q9I4E6">
    <property type="interactions" value="496"/>
</dbReference>
<dbReference type="STRING" id="208964.PA1192"/>
<dbReference type="PaxDb" id="208964-PA1192"/>
<dbReference type="DNASU" id="883085"/>
<dbReference type="GeneID" id="77222218"/>
<dbReference type="GeneID" id="883085"/>
<dbReference type="KEGG" id="pae:PA1192"/>
<dbReference type="PATRIC" id="fig|208964.12.peg.1238"/>
<dbReference type="PseudoCAP" id="PA1192"/>
<dbReference type="HOGENOM" id="CLU_026481_0_0_6"/>
<dbReference type="InParanoid" id="Q9I4E6"/>
<dbReference type="OrthoDB" id="9801054at2"/>
<dbReference type="PhylomeDB" id="Q9I4E6"/>
<dbReference type="BioCyc" id="PAER208964:G1FZ6-1217-MONOMER"/>
<dbReference type="PHI-base" id="PHI:8370"/>
<dbReference type="Proteomes" id="UP000002438">
    <property type="component" value="Chromosome"/>
</dbReference>
<dbReference type="GO" id="GO:0005829">
    <property type="term" value="C:cytosol"/>
    <property type="evidence" value="ECO:0000318"/>
    <property type="project" value="GO_Central"/>
</dbReference>
<dbReference type="GO" id="GO:0051539">
    <property type="term" value="F:4 iron, 4 sulfur cluster binding"/>
    <property type="evidence" value="ECO:0007669"/>
    <property type="project" value="UniProtKB-UniRule"/>
</dbReference>
<dbReference type="GO" id="GO:0005524">
    <property type="term" value="F:ATP binding"/>
    <property type="evidence" value="ECO:0007669"/>
    <property type="project" value="UniProtKB-UniRule"/>
</dbReference>
<dbReference type="GO" id="GO:0000287">
    <property type="term" value="F:magnesium ion binding"/>
    <property type="evidence" value="ECO:0007669"/>
    <property type="project" value="UniProtKB-UniRule"/>
</dbReference>
<dbReference type="GO" id="GO:0016783">
    <property type="term" value="F:sulfurtransferase activity"/>
    <property type="evidence" value="ECO:0000318"/>
    <property type="project" value="GO_Central"/>
</dbReference>
<dbReference type="GO" id="GO:0000049">
    <property type="term" value="F:tRNA binding"/>
    <property type="evidence" value="ECO:0007669"/>
    <property type="project" value="UniProtKB-KW"/>
</dbReference>
<dbReference type="GO" id="GO:0034227">
    <property type="term" value="P:tRNA thio-modification"/>
    <property type="evidence" value="ECO:0000318"/>
    <property type="project" value="GO_Central"/>
</dbReference>
<dbReference type="CDD" id="cd24138">
    <property type="entry name" value="TtcA-like"/>
    <property type="match status" value="1"/>
</dbReference>
<dbReference type="Gene3D" id="3.40.50.620">
    <property type="entry name" value="HUPs"/>
    <property type="match status" value="1"/>
</dbReference>
<dbReference type="HAMAP" id="MF_01850">
    <property type="entry name" value="TtcA"/>
    <property type="match status" value="1"/>
</dbReference>
<dbReference type="InterPro" id="IPR014729">
    <property type="entry name" value="Rossmann-like_a/b/a_fold"/>
</dbReference>
<dbReference type="InterPro" id="IPR011063">
    <property type="entry name" value="TilS/TtcA_N"/>
</dbReference>
<dbReference type="InterPro" id="IPR012089">
    <property type="entry name" value="tRNA_Cyd_32_2_STrfase"/>
</dbReference>
<dbReference type="InterPro" id="IPR035107">
    <property type="entry name" value="tRNA_thiolation_TtcA_Ctu1"/>
</dbReference>
<dbReference type="NCBIfam" id="NF007972">
    <property type="entry name" value="PRK10696.1"/>
    <property type="match status" value="1"/>
</dbReference>
<dbReference type="PANTHER" id="PTHR43686:SF1">
    <property type="entry name" value="AMINOTRAN_5 DOMAIN-CONTAINING PROTEIN"/>
    <property type="match status" value="1"/>
</dbReference>
<dbReference type="PANTHER" id="PTHR43686">
    <property type="entry name" value="SULFURTRANSFERASE-RELATED"/>
    <property type="match status" value="1"/>
</dbReference>
<dbReference type="Pfam" id="PF01171">
    <property type="entry name" value="ATP_bind_3"/>
    <property type="match status" value="1"/>
</dbReference>
<dbReference type="PIRSF" id="PIRSF004976">
    <property type="entry name" value="ATPase_YdaO"/>
    <property type="match status" value="1"/>
</dbReference>
<dbReference type="SUPFAM" id="SSF52402">
    <property type="entry name" value="Adenine nucleotide alpha hydrolases-like"/>
    <property type="match status" value="1"/>
</dbReference>
<keyword id="KW-0004">4Fe-4S</keyword>
<keyword id="KW-0067">ATP-binding</keyword>
<keyword id="KW-0963">Cytoplasm</keyword>
<keyword id="KW-0408">Iron</keyword>
<keyword id="KW-0411">Iron-sulfur</keyword>
<keyword id="KW-0460">Magnesium</keyword>
<keyword id="KW-0479">Metal-binding</keyword>
<keyword id="KW-0547">Nucleotide-binding</keyword>
<keyword id="KW-1185">Reference proteome</keyword>
<keyword id="KW-0694">RNA-binding</keyword>
<keyword id="KW-0808">Transferase</keyword>
<keyword id="KW-0819">tRNA processing</keyword>
<keyword id="KW-0820">tRNA-binding</keyword>
<name>TTCA_PSEAE</name>
<gene>
    <name evidence="1" type="primary">ttcA</name>
    <name type="ordered locus">PA1192</name>
</gene>
<comment type="function">
    <text evidence="1">Catalyzes the ATP-dependent 2-thiolation of cytidine in position 32 of tRNA, to form 2-thiocytidine (s(2)C32). The sulfur atoms are provided by the cysteine/cysteine desulfurase (IscS) system.</text>
</comment>
<comment type="catalytic activity">
    <reaction evidence="1">
        <text>cytidine(32) in tRNA + S-sulfanyl-L-cysteinyl-[cysteine desulfurase] + AH2 + ATP = 2-thiocytidine(32) in tRNA + L-cysteinyl-[cysteine desulfurase] + A + AMP + diphosphate + H(+)</text>
        <dbReference type="Rhea" id="RHEA:57048"/>
        <dbReference type="Rhea" id="RHEA-COMP:10288"/>
        <dbReference type="Rhea" id="RHEA-COMP:12157"/>
        <dbReference type="Rhea" id="RHEA-COMP:12158"/>
        <dbReference type="Rhea" id="RHEA-COMP:14821"/>
        <dbReference type="ChEBI" id="CHEBI:13193"/>
        <dbReference type="ChEBI" id="CHEBI:15378"/>
        <dbReference type="ChEBI" id="CHEBI:17499"/>
        <dbReference type="ChEBI" id="CHEBI:29950"/>
        <dbReference type="ChEBI" id="CHEBI:30616"/>
        <dbReference type="ChEBI" id="CHEBI:33019"/>
        <dbReference type="ChEBI" id="CHEBI:61963"/>
        <dbReference type="ChEBI" id="CHEBI:82748"/>
        <dbReference type="ChEBI" id="CHEBI:141453"/>
        <dbReference type="ChEBI" id="CHEBI:456215"/>
    </reaction>
    <physiologicalReaction direction="left-to-right" evidence="1">
        <dbReference type="Rhea" id="RHEA:57049"/>
    </physiologicalReaction>
</comment>
<comment type="cofactor">
    <cofactor evidence="1">
        <name>Mg(2+)</name>
        <dbReference type="ChEBI" id="CHEBI:18420"/>
    </cofactor>
</comment>
<comment type="cofactor">
    <cofactor evidence="1">
        <name>[4Fe-4S] cluster</name>
        <dbReference type="ChEBI" id="CHEBI:49883"/>
    </cofactor>
    <text evidence="1">Binds 1 [4Fe-4S] cluster per subunit. The cluster is chelated by three Cys residues, the fourth Fe has a free coordination site that may bind a sulfur atom transferred from the persulfide of IscS.</text>
</comment>
<comment type="pathway">
    <text evidence="1">tRNA modification.</text>
</comment>
<comment type="subunit">
    <text evidence="1">Homodimer.</text>
</comment>
<comment type="subcellular location">
    <subcellularLocation>
        <location evidence="1">Cytoplasm</location>
    </subcellularLocation>
</comment>
<comment type="miscellaneous">
    <text evidence="1">The thiolation reaction likely consists of two steps: a first activation step by ATP to form an adenylated intermediate of the target base of tRNA, and a second nucleophilic substitution step of the sulfur (S) atom supplied by the hydrosulfide attached to the Fe-S cluster.</text>
</comment>
<comment type="similarity">
    <text evidence="1">Belongs to the TtcA family.</text>
</comment>
<reference key="1">
    <citation type="journal article" date="2000" name="Nature">
        <title>Complete genome sequence of Pseudomonas aeruginosa PAO1, an opportunistic pathogen.</title>
        <authorList>
            <person name="Stover C.K."/>
            <person name="Pham X.-Q.T."/>
            <person name="Erwin A.L."/>
            <person name="Mizoguchi S.D."/>
            <person name="Warrener P."/>
            <person name="Hickey M.J."/>
            <person name="Brinkman F.S.L."/>
            <person name="Hufnagle W.O."/>
            <person name="Kowalik D.J."/>
            <person name="Lagrou M."/>
            <person name="Garber R.L."/>
            <person name="Goltry L."/>
            <person name="Tolentino E."/>
            <person name="Westbrock-Wadman S."/>
            <person name="Yuan Y."/>
            <person name="Brody L.L."/>
            <person name="Coulter S.N."/>
            <person name="Folger K.R."/>
            <person name="Kas A."/>
            <person name="Larbig K."/>
            <person name="Lim R.M."/>
            <person name="Smith K.A."/>
            <person name="Spencer D.H."/>
            <person name="Wong G.K.-S."/>
            <person name="Wu Z."/>
            <person name="Paulsen I.T."/>
            <person name="Reizer J."/>
            <person name="Saier M.H. Jr."/>
            <person name="Hancock R.E.W."/>
            <person name="Lory S."/>
            <person name="Olson M.V."/>
        </authorList>
    </citation>
    <scope>NUCLEOTIDE SEQUENCE [LARGE SCALE GENOMIC DNA]</scope>
    <source>
        <strain>ATCC 15692 / DSM 22644 / CIP 104116 / JCM 14847 / LMG 12228 / 1C / PRS 101 / PAO1</strain>
    </source>
</reference>
<evidence type="ECO:0000255" key="1">
    <source>
        <dbReference type="HAMAP-Rule" id="MF_01850"/>
    </source>
</evidence>
<feature type="chain" id="PRO_0000348791" description="tRNA-cytidine(32) 2-sulfurtransferase">
    <location>
        <begin position="1"/>
        <end position="274"/>
    </location>
</feature>
<feature type="short sequence motif" description="PP-loop motif" evidence="1">
    <location>
        <begin position="40"/>
        <end position="45"/>
    </location>
</feature>
<feature type="binding site" evidence="1">
    <location>
        <position position="115"/>
    </location>
    <ligand>
        <name>[4Fe-4S] cluster</name>
        <dbReference type="ChEBI" id="CHEBI:49883"/>
    </ligand>
</feature>
<feature type="binding site" evidence="1">
    <location>
        <position position="118"/>
    </location>
    <ligand>
        <name>[4Fe-4S] cluster</name>
        <dbReference type="ChEBI" id="CHEBI:49883"/>
    </ligand>
</feature>
<feature type="binding site" evidence="1">
    <location>
        <position position="206"/>
    </location>
    <ligand>
        <name>[4Fe-4S] cluster</name>
        <dbReference type="ChEBI" id="CHEBI:49883"/>
    </ligand>
</feature>
<organism>
    <name type="scientific">Pseudomonas aeruginosa (strain ATCC 15692 / DSM 22644 / CIP 104116 / JCM 14847 / LMG 12228 / 1C / PRS 101 / PAO1)</name>
    <dbReference type="NCBI Taxonomy" id="208964"/>
    <lineage>
        <taxon>Bacteria</taxon>
        <taxon>Pseudomonadati</taxon>
        <taxon>Pseudomonadota</taxon>
        <taxon>Gammaproteobacteria</taxon>
        <taxon>Pseudomonadales</taxon>
        <taxon>Pseudomonadaceae</taxon>
        <taxon>Pseudomonas</taxon>
    </lineage>
</organism>
<protein>
    <recommendedName>
        <fullName evidence="1">tRNA-cytidine(32) 2-sulfurtransferase</fullName>
        <ecNumber evidence="1">2.8.1.-</ecNumber>
    </recommendedName>
    <alternativeName>
        <fullName evidence="1">Two-thiocytidine biosynthesis protein A</fullName>
    </alternativeName>
    <alternativeName>
        <fullName evidence="1">tRNA 2-thiocytidine biosynthesis protein TtcA</fullName>
    </alternativeName>
</protein>
<accession>Q9I4E6</accession>
<proteinExistence type="inferred from homology"/>